<evidence type="ECO:0000255" key="1">
    <source>
        <dbReference type="HAMAP-Rule" id="MF_00453"/>
    </source>
</evidence>
<dbReference type="EC" id="4.1.1.49" evidence="1"/>
<dbReference type="EMBL" id="CP000777">
    <property type="protein sequence ID" value="ABZ95361.1"/>
    <property type="molecule type" value="Genomic_DNA"/>
</dbReference>
<dbReference type="RefSeq" id="WP_012389914.1">
    <property type="nucleotide sequence ID" value="NC_010842.1"/>
</dbReference>
<dbReference type="SMR" id="B0SFJ3"/>
<dbReference type="KEGG" id="lbf:LBF_2886"/>
<dbReference type="HOGENOM" id="CLU_018247_0_1_12"/>
<dbReference type="UniPathway" id="UPA00138"/>
<dbReference type="GO" id="GO:0005829">
    <property type="term" value="C:cytosol"/>
    <property type="evidence" value="ECO:0007669"/>
    <property type="project" value="TreeGrafter"/>
</dbReference>
<dbReference type="GO" id="GO:0005524">
    <property type="term" value="F:ATP binding"/>
    <property type="evidence" value="ECO:0007669"/>
    <property type="project" value="UniProtKB-UniRule"/>
</dbReference>
<dbReference type="GO" id="GO:0046872">
    <property type="term" value="F:metal ion binding"/>
    <property type="evidence" value="ECO:0007669"/>
    <property type="project" value="UniProtKB-KW"/>
</dbReference>
<dbReference type="GO" id="GO:0004612">
    <property type="term" value="F:phosphoenolpyruvate carboxykinase (ATP) activity"/>
    <property type="evidence" value="ECO:0007669"/>
    <property type="project" value="UniProtKB-UniRule"/>
</dbReference>
<dbReference type="GO" id="GO:0006094">
    <property type="term" value="P:gluconeogenesis"/>
    <property type="evidence" value="ECO:0007669"/>
    <property type="project" value="UniProtKB-UniRule"/>
</dbReference>
<dbReference type="CDD" id="cd00484">
    <property type="entry name" value="PEPCK_ATP"/>
    <property type="match status" value="1"/>
</dbReference>
<dbReference type="FunFam" id="2.170.8.10:FF:000001">
    <property type="entry name" value="Phosphoenolpyruvate carboxykinase (ATP)"/>
    <property type="match status" value="1"/>
</dbReference>
<dbReference type="FunFam" id="3.40.449.10:FF:000001">
    <property type="entry name" value="Phosphoenolpyruvate carboxykinase (ATP)"/>
    <property type="match status" value="1"/>
</dbReference>
<dbReference type="Gene3D" id="3.90.228.20">
    <property type="match status" value="1"/>
</dbReference>
<dbReference type="Gene3D" id="3.40.449.10">
    <property type="entry name" value="Phosphoenolpyruvate Carboxykinase, domain 1"/>
    <property type="match status" value="1"/>
</dbReference>
<dbReference type="Gene3D" id="2.170.8.10">
    <property type="entry name" value="Phosphoenolpyruvate Carboxykinase, domain 2"/>
    <property type="match status" value="1"/>
</dbReference>
<dbReference type="HAMAP" id="MF_00453">
    <property type="entry name" value="PEPCK_ATP"/>
    <property type="match status" value="1"/>
</dbReference>
<dbReference type="InterPro" id="IPR001272">
    <property type="entry name" value="PEP_carboxykinase_ATP"/>
</dbReference>
<dbReference type="InterPro" id="IPR013035">
    <property type="entry name" value="PEP_carboxykinase_C"/>
</dbReference>
<dbReference type="InterPro" id="IPR008210">
    <property type="entry name" value="PEP_carboxykinase_N"/>
</dbReference>
<dbReference type="InterPro" id="IPR015994">
    <property type="entry name" value="PEPCK_ATP_CS"/>
</dbReference>
<dbReference type="NCBIfam" id="TIGR00224">
    <property type="entry name" value="pckA"/>
    <property type="match status" value="1"/>
</dbReference>
<dbReference type="NCBIfam" id="NF006819">
    <property type="entry name" value="PRK09344.1-1"/>
    <property type="match status" value="1"/>
</dbReference>
<dbReference type="NCBIfam" id="NF006820">
    <property type="entry name" value="PRK09344.1-2"/>
    <property type="match status" value="1"/>
</dbReference>
<dbReference type="NCBIfam" id="NF006821">
    <property type="entry name" value="PRK09344.1-3"/>
    <property type="match status" value="1"/>
</dbReference>
<dbReference type="PANTHER" id="PTHR30031:SF0">
    <property type="entry name" value="PHOSPHOENOLPYRUVATE CARBOXYKINASE (ATP)"/>
    <property type="match status" value="1"/>
</dbReference>
<dbReference type="PANTHER" id="PTHR30031">
    <property type="entry name" value="PHOSPHOENOLPYRUVATE CARBOXYKINASE ATP"/>
    <property type="match status" value="1"/>
</dbReference>
<dbReference type="Pfam" id="PF01293">
    <property type="entry name" value="PEPCK_ATP"/>
    <property type="match status" value="1"/>
</dbReference>
<dbReference type="PIRSF" id="PIRSF006294">
    <property type="entry name" value="PEP_crbxkin"/>
    <property type="match status" value="1"/>
</dbReference>
<dbReference type="SUPFAM" id="SSF68923">
    <property type="entry name" value="PEP carboxykinase N-terminal domain"/>
    <property type="match status" value="1"/>
</dbReference>
<dbReference type="SUPFAM" id="SSF53795">
    <property type="entry name" value="PEP carboxykinase-like"/>
    <property type="match status" value="1"/>
</dbReference>
<dbReference type="PROSITE" id="PS00532">
    <property type="entry name" value="PEPCK_ATP"/>
    <property type="match status" value="1"/>
</dbReference>
<organism>
    <name type="scientific">Leptospira biflexa serovar Patoc (strain Patoc 1 / Ames)</name>
    <dbReference type="NCBI Taxonomy" id="355278"/>
    <lineage>
        <taxon>Bacteria</taxon>
        <taxon>Pseudomonadati</taxon>
        <taxon>Spirochaetota</taxon>
        <taxon>Spirochaetia</taxon>
        <taxon>Leptospirales</taxon>
        <taxon>Leptospiraceae</taxon>
        <taxon>Leptospira</taxon>
    </lineage>
</organism>
<proteinExistence type="inferred from homology"/>
<feature type="chain" id="PRO_1000125070" description="Phosphoenolpyruvate carboxykinase (ATP)">
    <location>
        <begin position="1"/>
        <end position="530"/>
    </location>
</feature>
<feature type="binding site" evidence="1">
    <location>
        <position position="57"/>
    </location>
    <ligand>
        <name>substrate</name>
    </ligand>
</feature>
<feature type="binding site" evidence="1">
    <location>
        <position position="193"/>
    </location>
    <ligand>
        <name>substrate</name>
    </ligand>
</feature>
<feature type="binding site" evidence="1">
    <location>
        <position position="199"/>
    </location>
    <ligand>
        <name>ATP</name>
        <dbReference type="ChEBI" id="CHEBI:30616"/>
    </ligand>
</feature>
<feature type="binding site" evidence="1">
    <location>
        <position position="199"/>
    </location>
    <ligand>
        <name>Mn(2+)</name>
        <dbReference type="ChEBI" id="CHEBI:29035"/>
    </ligand>
</feature>
<feature type="binding site" evidence="1">
    <location>
        <position position="199"/>
    </location>
    <ligand>
        <name>substrate</name>
    </ligand>
</feature>
<feature type="binding site" evidence="1">
    <location>
        <position position="218"/>
    </location>
    <ligand>
        <name>ATP</name>
        <dbReference type="ChEBI" id="CHEBI:30616"/>
    </ligand>
</feature>
<feature type="binding site" evidence="1">
    <location>
        <position position="218"/>
    </location>
    <ligand>
        <name>Mn(2+)</name>
        <dbReference type="ChEBI" id="CHEBI:29035"/>
    </ligand>
</feature>
<feature type="binding site" evidence="1">
    <location>
        <begin position="234"/>
        <end position="242"/>
    </location>
    <ligand>
        <name>ATP</name>
        <dbReference type="ChEBI" id="CHEBI:30616"/>
    </ligand>
</feature>
<feature type="binding site" evidence="1">
    <location>
        <position position="255"/>
    </location>
    <ligand>
        <name>Mn(2+)</name>
        <dbReference type="ChEBI" id="CHEBI:29035"/>
    </ligand>
</feature>
<feature type="binding site" evidence="1">
    <location>
        <position position="283"/>
    </location>
    <ligand>
        <name>ATP</name>
        <dbReference type="ChEBI" id="CHEBI:30616"/>
    </ligand>
</feature>
<feature type="binding site" evidence="1">
    <location>
        <position position="320"/>
    </location>
    <ligand>
        <name>ATP</name>
        <dbReference type="ChEBI" id="CHEBI:30616"/>
    </ligand>
</feature>
<feature type="binding site" evidence="1">
    <location>
        <position position="320"/>
    </location>
    <ligand>
        <name>substrate</name>
    </ligand>
</feature>
<feature type="binding site" evidence="1">
    <location>
        <position position="445"/>
    </location>
    <ligand>
        <name>ATP</name>
        <dbReference type="ChEBI" id="CHEBI:30616"/>
    </ligand>
</feature>
<keyword id="KW-0067">ATP-binding</keyword>
<keyword id="KW-0963">Cytoplasm</keyword>
<keyword id="KW-0210">Decarboxylase</keyword>
<keyword id="KW-0312">Gluconeogenesis</keyword>
<keyword id="KW-0456">Lyase</keyword>
<keyword id="KW-0464">Manganese</keyword>
<keyword id="KW-0479">Metal-binding</keyword>
<keyword id="KW-0547">Nucleotide-binding</keyword>
<protein>
    <recommendedName>
        <fullName evidence="1">Phosphoenolpyruvate carboxykinase (ATP)</fullName>
        <shortName evidence="1">PCK</shortName>
        <shortName evidence="1">PEP carboxykinase</shortName>
        <shortName evidence="1">PEPCK</shortName>
        <ecNumber evidence="1">4.1.1.49</ecNumber>
    </recommendedName>
</protein>
<sequence length="530" mass="59348">MSVSTNLKGLAELGLKPSEVFHNLSYEEIYQHELNNKEGVTSDNGTMMVDTGIFTGRSPKDKYFVDEPSSQNNIWWGPVNTKVSEAIFNELYAEVTKFLDNKKLYVFDGHAGTNDDTRISLRVVTERAWQHHFCTNMFLRPTKEELAKLDPEFTIINASGYKNPKYKEHGLNSEVFVIFHLAKKICIIGGTEYGGEMKKGIFSVMNYYLPLKNVLTMHCSANVGKDGDSALFFGLSGTGKTTLSTDPNRKLIGDDEHGWDDNGIFNIEGGCYAKTINLDPKTEPEIYAAIRRDALLENVVYDATTKKVDYSSAAKTENTRVSYPIFHIDNIQPGSKAGHPNTVIFLTYDAYGVLPAVSKLSIEQAMYHFLSGYTAKVAGTERGVKEPQATFSACFGQAFMTLHPTYYAKLLGEKMKKHQVNAYLINTGLVGGKYGVGKRMNLPATRQIINEILNGNIEKSEFEKHPVFQVSFPKSVNGVDAHILNPRNAWENKEDYDKTAADLAKQFVENYKKYLTGSKEFDYSQYGPIA</sequence>
<name>PCKA_LEPBA</name>
<comment type="function">
    <text evidence="1">Involved in the gluconeogenesis. Catalyzes the conversion of oxaloacetate (OAA) to phosphoenolpyruvate (PEP) through direct phosphoryl transfer between the nucleoside triphosphate and OAA.</text>
</comment>
<comment type="catalytic activity">
    <reaction evidence="1">
        <text>oxaloacetate + ATP = phosphoenolpyruvate + ADP + CO2</text>
        <dbReference type="Rhea" id="RHEA:18617"/>
        <dbReference type="ChEBI" id="CHEBI:16452"/>
        <dbReference type="ChEBI" id="CHEBI:16526"/>
        <dbReference type="ChEBI" id="CHEBI:30616"/>
        <dbReference type="ChEBI" id="CHEBI:58702"/>
        <dbReference type="ChEBI" id="CHEBI:456216"/>
        <dbReference type="EC" id="4.1.1.49"/>
    </reaction>
</comment>
<comment type="cofactor">
    <cofactor evidence="1">
        <name>Mn(2+)</name>
        <dbReference type="ChEBI" id="CHEBI:29035"/>
    </cofactor>
    <text evidence="1">Binds 1 Mn(2+) ion per subunit.</text>
</comment>
<comment type="pathway">
    <text evidence="1">Carbohydrate biosynthesis; gluconeogenesis.</text>
</comment>
<comment type="subcellular location">
    <subcellularLocation>
        <location evidence="1">Cytoplasm</location>
    </subcellularLocation>
</comment>
<comment type="similarity">
    <text evidence="1">Belongs to the phosphoenolpyruvate carboxykinase (ATP) family.</text>
</comment>
<gene>
    <name evidence="1" type="primary">pckA</name>
    <name type="ordered locus">LBF_2886</name>
</gene>
<reference key="1">
    <citation type="journal article" date="2008" name="PLoS ONE">
        <title>Genome sequence of the saprophyte Leptospira biflexa provides insights into the evolution of Leptospira and the pathogenesis of leptospirosis.</title>
        <authorList>
            <person name="Picardeau M."/>
            <person name="Bulach D.M."/>
            <person name="Bouchier C."/>
            <person name="Zuerner R.L."/>
            <person name="Zidane N."/>
            <person name="Wilson P.J."/>
            <person name="Creno S."/>
            <person name="Kuczek E.S."/>
            <person name="Bommezzadri S."/>
            <person name="Davis J.C."/>
            <person name="McGrath A."/>
            <person name="Johnson M.J."/>
            <person name="Boursaux-Eude C."/>
            <person name="Seemann T."/>
            <person name="Rouy Z."/>
            <person name="Coppel R.L."/>
            <person name="Rood J.I."/>
            <person name="Lajus A."/>
            <person name="Davies J.K."/>
            <person name="Medigue C."/>
            <person name="Adler B."/>
        </authorList>
    </citation>
    <scope>NUCLEOTIDE SEQUENCE [LARGE SCALE GENOMIC DNA]</scope>
    <source>
        <strain>Patoc 1 / Ames</strain>
    </source>
</reference>
<accession>B0SFJ3</accession>